<protein>
    <recommendedName>
        <fullName>Protein YIF1A</fullName>
    </recommendedName>
    <alternativeName>
        <fullName>YIP1-interacting factor homolog A</fullName>
    </alternativeName>
</protein>
<comment type="function">
    <text evidence="1">Possible role in transport between endoplasmic reticulum and Golgi.</text>
</comment>
<comment type="subcellular location">
    <subcellularLocation>
        <location evidence="1">Endoplasmic reticulum membrane</location>
        <topology evidence="2">Multi-pass membrane protein</topology>
    </subcellularLocation>
    <subcellularLocation>
        <location evidence="1">Golgi apparatus membrane</location>
        <topology evidence="2">Multi-pass membrane protein</topology>
    </subcellularLocation>
    <subcellularLocation>
        <location evidence="1">Endoplasmic reticulum-Golgi intermediate compartment membrane</location>
        <topology evidence="2">Multi-pass membrane protein</topology>
    </subcellularLocation>
    <text evidence="1">Cycles between the endoplasmic reticulum and the endoplasmic reticulum-Golgi intermediate compartment.</text>
</comment>
<comment type="similarity">
    <text evidence="4">Belongs to the YIF1 family.</text>
</comment>
<comment type="sequence caution" evidence="4">
    <conflict type="erroneous initiation">
        <sequence resource="EMBL-CDS" id="AAH46046"/>
    </conflict>
    <text>Extended N-terminus.</text>
</comment>
<name>YIF1A_DANRE</name>
<organism>
    <name type="scientific">Danio rerio</name>
    <name type="common">Zebrafish</name>
    <name type="synonym">Brachydanio rerio</name>
    <dbReference type="NCBI Taxonomy" id="7955"/>
    <lineage>
        <taxon>Eukaryota</taxon>
        <taxon>Metazoa</taxon>
        <taxon>Chordata</taxon>
        <taxon>Craniata</taxon>
        <taxon>Vertebrata</taxon>
        <taxon>Euteleostomi</taxon>
        <taxon>Actinopterygii</taxon>
        <taxon>Neopterygii</taxon>
        <taxon>Teleostei</taxon>
        <taxon>Ostariophysi</taxon>
        <taxon>Cypriniformes</taxon>
        <taxon>Danionidae</taxon>
        <taxon>Danioninae</taxon>
        <taxon>Danio</taxon>
    </lineage>
</organism>
<gene>
    <name type="primary">yif1a</name>
    <name type="ORF">zgc:73136</name>
</gene>
<feature type="chain" id="PRO_0000233277" description="Protein YIF1A">
    <location>
        <begin position="1"/>
        <end position="307"/>
    </location>
</feature>
<feature type="topological domain" description="Cytoplasmic" evidence="4">
    <location>
        <begin position="1"/>
        <end position="148"/>
    </location>
</feature>
<feature type="transmembrane region" description="Helical" evidence="2">
    <location>
        <begin position="149"/>
        <end position="169"/>
    </location>
</feature>
<feature type="topological domain" description="Lumenal" evidence="4">
    <location>
        <begin position="170"/>
        <end position="184"/>
    </location>
</feature>
<feature type="transmembrane region" description="Helical" evidence="2">
    <location>
        <begin position="185"/>
        <end position="205"/>
    </location>
</feature>
<feature type="topological domain" description="Cytoplasmic" evidence="4">
    <location>
        <begin position="206"/>
        <end position="213"/>
    </location>
</feature>
<feature type="transmembrane region" description="Helical" evidence="2">
    <location>
        <begin position="214"/>
        <end position="236"/>
    </location>
</feature>
<feature type="topological domain" description="Lumenal" evidence="4">
    <location>
        <begin position="237"/>
        <end position="239"/>
    </location>
</feature>
<feature type="transmembrane region" description="Helical" evidence="2">
    <location>
        <begin position="240"/>
        <end position="259"/>
    </location>
</feature>
<feature type="topological domain" description="Cytoplasmic" evidence="4">
    <location>
        <begin position="260"/>
        <end position="285"/>
    </location>
</feature>
<feature type="transmembrane region" description="Helical" evidence="2">
    <location>
        <begin position="286"/>
        <end position="306"/>
    </location>
</feature>
<feature type="region of interest" description="Disordered" evidence="3">
    <location>
        <begin position="1"/>
        <end position="42"/>
    </location>
</feature>
<reference key="1">
    <citation type="submission" date="2003-10" db="EMBL/GenBank/DDBJ databases">
        <authorList>
            <consortium name="NIH - Zebrafish Gene Collection (ZGC) project"/>
        </authorList>
    </citation>
    <scope>NUCLEOTIDE SEQUENCE [LARGE SCALE MRNA]</scope>
    <source>
        <tissue>Embryo</tissue>
        <tissue>Eye</tissue>
    </source>
</reference>
<accession>Q6PC24</accession>
<accession>Q7ZV12</accession>
<evidence type="ECO:0000250" key="1">
    <source>
        <dbReference type="UniProtKB" id="O95070"/>
    </source>
</evidence>
<evidence type="ECO:0000255" key="2"/>
<evidence type="ECO:0000256" key="3">
    <source>
        <dbReference type="SAM" id="MobiDB-lite"/>
    </source>
</evidence>
<evidence type="ECO:0000305" key="4"/>
<keyword id="KW-0256">Endoplasmic reticulum</keyword>
<keyword id="KW-0931">ER-Golgi transport</keyword>
<keyword id="KW-0333">Golgi apparatus</keyword>
<keyword id="KW-0472">Membrane</keyword>
<keyword id="KW-0653">Protein transport</keyword>
<keyword id="KW-1185">Reference proteome</keyword>
<keyword id="KW-0812">Transmembrane</keyword>
<keyword id="KW-1133">Transmembrane helix</keyword>
<keyword id="KW-0813">Transport</keyword>
<proteinExistence type="evidence at transcript level"/>
<dbReference type="EMBL" id="BC046046">
    <property type="protein sequence ID" value="AAH46046.1"/>
    <property type="status" value="ALT_INIT"/>
    <property type="molecule type" value="mRNA"/>
</dbReference>
<dbReference type="EMBL" id="BC059499">
    <property type="protein sequence ID" value="AAH59499.1"/>
    <property type="molecule type" value="mRNA"/>
</dbReference>
<dbReference type="EMBL" id="BC071433">
    <property type="protein sequence ID" value="AAH71433.1"/>
    <property type="molecule type" value="mRNA"/>
</dbReference>
<dbReference type="RefSeq" id="NP_956225.1">
    <property type="nucleotide sequence ID" value="NM_199931.1"/>
</dbReference>
<dbReference type="RefSeq" id="XP_009289368.1">
    <property type="nucleotide sequence ID" value="XM_009291093.1"/>
</dbReference>
<dbReference type="RefSeq" id="XP_017214480.1">
    <property type="nucleotide sequence ID" value="XM_017358991.2"/>
</dbReference>
<dbReference type="FunCoup" id="Q6PC24">
    <property type="interactions" value="2474"/>
</dbReference>
<dbReference type="STRING" id="7955.ENSDARP00000115104"/>
<dbReference type="PaxDb" id="7955-ENSDARP00000115104"/>
<dbReference type="Ensembl" id="ENSDART00000009385">
    <property type="protein sequence ID" value="ENSDARP00000018303"/>
    <property type="gene ID" value="ENSDARG00000019636"/>
</dbReference>
<dbReference type="Ensembl" id="ENSDART00000137782">
    <property type="protein sequence ID" value="ENSDARP00000115104"/>
    <property type="gene ID" value="ENSDARG00000019636"/>
</dbReference>
<dbReference type="GeneID" id="334982"/>
<dbReference type="KEGG" id="dre:334982"/>
<dbReference type="AGR" id="ZFIN:ZDB-GENE-030131-6922"/>
<dbReference type="CTD" id="10897"/>
<dbReference type="ZFIN" id="ZDB-GENE-030131-6922">
    <property type="gene designation" value="yif1a"/>
</dbReference>
<dbReference type="eggNOG" id="KOG3094">
    <property type="taxonomic scope" value="Eukaryota"/>
</dbReference>
<dbReference type="HOGENOM" id="CLU_047877_1_1_1"/>
<dbReference type="InParanoid" id="Q6PC24"/>
<dbReference type="OMA" id="NWEVRYS"/>
<dbReference type="OrthoDB" id="337750at2759"/>
<dbReference type="PhylomeDB" id="Q6PC24"/>
<dbReference type="TreeFam" id="TF314528"/>
<dbReference type="PRO" id="PR:Q6PC24"/>
<dbReference type="Proteomes" id="UP000000437">
    <property type="component" value="Chromosome 14"/>
</dbReference>
<dbReference type="Bgee" id="ENSDARG00000019636">
    <property type="expression patterns" value="Expressed in ovary and 32 other cell types or tissues"/>
</dbReference>
<dbReference type="ExpressionAtlas" id="Q6PC24">
    <property type="expression patterns" value="baseline and differential"/>
</dbReference>
<dbReference type="GO" id="GO:0030134">
    <property type="term" value="C:COPII-coated ER to Golgi transport vesicle"/>
    <property type="evidence" value="ECO:0000318"/>
    <property type="project" value="GO_Central"/>
</dbReference>
<dbReference type="GO" id="GO:0005789">
    <property type="term" value="C:endoplasmic reticulum membrane"/>
    <property type="evidence" value="ECO:0000318"/>
    <property type="project" value="GO_Central"/>
</dbReference>
<dbReference type="GO" id="GO:0005793">
    <property type="term" value="C:endoplasmic reticulum-Golgi intermediate compartment"/>
    <property type="evidence" value="ECO:0000318"/>
    <property type="project" value="GO_Central"/>
</dbReference>
<dbReference type="GO" id="GO:0033116">
    <property type="term" value="C:endoplasmic reticulum-Golgi intermediate compartment membrane"/>
    <property type="evidence" value="ECO:0007669"/>
    <property type="project" value="UniProtKB-SubCell"/>
</dbReference>
<dbReference type="GO" id="GO:0000139">
    <property type="term" value="C:Golgi membrane"/>
    <property type="evidence" value="ECO:0000318"/>
    <property type="project" value="GO_Central"/>
</dbReference>
<dbReference type="GO" id="GO:0006888">
    <property type="term" value="P:endoplasmic reticulum to Golgi vesicle-mediated transport"/>
    <property type="evidence" value="ECO:0000318"/>
    <property type="project" value="GO_Central"/>
</dbReference>
<dbReference type="GO" id="GO:0015031">
    <property type="term" value="P:protein transport"/>
    <property type="evidence" value="ECO:0007669"/>
    <property type="project" value="UniProtKB-KW"/>
</dbReference>
<dbReference type="InterPro" id="IPR005578">
    <property type="entry name" value="Yif1_fam"/>
</dbReference>
<dbReference type="PANTHER" id="PTHR14083:SF2">
    <property type="entry name" value="PROTEIN YIF1A"/>
    <property type="match status" value="1"/>
</dbReference>
<dbReference type="PANTHER" id="PTHR14083">
    <property type="entry name" value="YIP1 INTERACTING FACTOR HOMOLOG YIF1 PROTEIN"/>
    <property type="match status" value="1"/>
</dbReference>
<dbReference type="Pfam" id="PF03878">
    <property type="entry name" value="YIF1"/>
    <property type="match status" value="1"/>
</dbReference>
<sequence length="307" mass="34257">MNFQQQGYRATKPRARASPPTGGPMLFDDTSSGPPPMNNQNYYSSGYNMAEMPAGGQEPGVGNIFADPMANAAMMYGSTLANQGKDIVNKEINRFMSVNKLKYFFAVDTKYVMKKLLLLMFPYTHQDWEVRYHRDTPLTPRHDVNAPDLYIPTMAFITYILLAGMALGIQKRFSPEVLGLCASTALVWMIIEVLVMLLSLYLLTVHTDLSTFDLVAYSGYKYVGMILTVFCGLLFGSDGYYVALAWSSCALMFFIVRSLKMKILSSISADSMGAGASAKPRFRLYITVASAAFQPFIIYWLTAHLVR</sequence>